<protein>
    <recommendedName>
        <fullName>WD repeat-containing protein 90</fullName>
    </recommendedName>
</protein>
<gene>
    <name type="primary">WDR90</name>
    <name type="synonym">C16orf15</name>
    <name type="synonym">C16orf16</name>
    <name type="synonym">C16orf17</name>
    <name type="synonym">C16orf18</name>
    <name type="synonym">C16orf19</name>
    <name type="synonym">KIAA1924</name>
</gene>
<feature type="chain" id="PRO_0000341412" description="WD repeat-containing protein 90">
    <location>
        <begin position="1"/>
        <end position="1748"/>
    </location>
</feature>
<feature type="repeat" description="WD 1">
    <location>
        <begin position="407"/>
        <end position="450"/>
    </location>
</feature>
<feature type="repeat" description="WD 2">
    <location>
        <begin position="452"/>
        <end position="494"/>
    </location>
</feature>
<feature type="repeat" description="WD 3">
    <location>
        <begin position="501"/>
        <end position="541"/>
    </location>
</feature>
<feature type="repeat" description="WD 4">
    <location>
        <begin position="615"/>
        <end position="654"/>
    </location>
</feature>
<feature type="repeat" description="WD 5">
    <location>
        <begin position="656"/>
        <end position="695"/>
    </location>
</feature>
<feature type="repeat" description="WD 6">
    <location>
        <begin position="698"/>
        <end position="737"/>
    </location>
</feature>
<feature type="repeat" description="WD 7">
    <location>
        <begin position="740"/>
        <end position="779"/>
    </location>
</feature>
<feature type="repeat" description="WD 8">
    <location>
        <begin position="782"/>
        <end position="821"/>
    </location>
</feature>
<feature type="repeat" description="WD 9">
    <location>
        <begin position="882"/>
        <end position="922"/>
    </location>
</feature>
<feature type="repeat" description="WD 10">
    <location>
        <begin position="926"/>
        <end position="964"/>
    </location>
</feature>
<feature type="repeat" description="WD 11">
    <location>
        <begin position="969"/>
        <end position="1009"/>
    </location>
</feature>
<feature type="repeat" description="WD 12">
    <location>
        <begin position="1156"/>
        <end position="1201"/>
    </location>
</feature>
<feature type="repeat" description="WD 13">
    <location>
        <begin position="1204"/>
        <end position="1245"/>
    </location>
</feature>
<feature type="repeat" description="WD 14">
    <location>
        <begin position="1247"/>
        <end position="1286"/>
    </location>
</feature>
<feature type="repeat" description="WD 15">
    <location>
        <begin position="1298"/>
        <end position="1326"/>
    </location>
</feature>
<feature type="repeat" description="WD 16">
    <location>
        <begin position="1327"/>
        <end position="1376"/>
    </location>
</feature>
<feature type="repeat" description="WD 17">
    <location>
        <begin position="1433"/>
        <end position="1472"/>
    </location>
</feature>
<feature type="repeat" description="WD 18">
    <location>
        <begin position="1475"/>
        <end position="1520"/>
    </location>
</feature>
<feature type="repeat" description="WD 19">
    <location>
        <begin position="1523"/>
        <end position="1562"/>
    </location>
</feature>
<feature type="repeat" description="WD 20">
    <location>
        <begin position="1568"/>
        <end position="1614"/>
    </location>
</feature>
<feature type="repeat" description="WD 21">
    <location>
        <begin position="1715"/>
        <end position="1748"/>
    </location>
</feature>
<feature type="region of interest" description="Binds with microtubules" evidence="7">
    <location>
        <begin position="1"/>
        <end position="207"/>
    </location>
</feature>
<feature type="region of interest" description="Disordered" evidence="2">
    <location>
        <begin position="274"/>
        <end position="308"/>
    </location>
</feature>
<feature type="region of interest" description="Disordered" evidence="2">
    <location>
        <begin position="1004"/>
        <end position="1071"/>
    </location>
</feature>
<feature type="modified residue" description="Phosphoserine" evidence="1">
    <location>
        <position position="241"/>
    </location>
</feature>
<feature type="splice variant" id="VSP_034290" description="In isoform 2 and isoform 4." evidence="8 9">
    <location>
        <begin position="1"/>
        <end position="1401"/>
    </location>
</feature>
<feature type="splice variant" id="VSP_034294" description="In isoform 5." evidence="9">
    <original>A</original>
    <variation>AQ</variation>
    <location>
        <position position="280"/>
    </location>
</feature>
<feature type="splice variant" id="VSP_034298" description="In isoform 3 and isoform 5." evidence="9">
    <original>EHEGPVSSVCVSPDGLRVLSATSSGHLGFLDTLSRVYHMLARSHTAPVLALAM</original>
    <variation>GDAVGTLSQLPESLAWMLGRGRPSPRGSAVSRPGSWLHRVPRGQVAYPEPWGG</variation>
    <location>
        <begin position="656"/>
        <end position="708"/>
    </location>
</feature>
<feature type="splice variant" id="VSP_034300" description="In isoform 3 and isoform 5." evidence="9">
    <location>
        <begin position="709"/>
        <end position="1748"/>
    </location>
</feature>
<feature type="splice variant" id="VSP_034303" description="In isoform 2 and isoform 4." evidence="8 9">
    <original>DDSVDMGVVGTTAGTLWFVSWAEGTSTRLISGHRSK</original>
    <variation>MLWFGQPGPGGWNRKCLRPFTLPRGQHPQPSYGFPQ</variation>
    <location>
        <begin position="1402"/>
        <end position="1437"/>
    </location>
</feature>
<feature type="splice variant" id="VSP_034306" description="In isoform 4." evidence="9">
    <location>
        <begin position="1580"/>
        <end position="1627"/>
    </location>
</feature>
<feature type="splice variant" id="VSP_041087" description="In isoform 2." evidence="8">
    <original>TQGHLPPSLAAFCPWDGALLMYVGPGVYKEVIIYNLCQKQVVEK</original>
    <variation>VNHAPGTVGGAGTHPPHRSMLRLCRLRATWHPPSLPSALGMGRS</variation>
    <location>
        <begin position="1629"/>
        <end position="1672"/>
    </location>
</feature>
<feature type="splice variant" id="VSP_041088" description="In isoform 2." evidence="8">
    <location>
        <begin position="1673"/>
        <end position="1748"/>
    </location>
</feature>
<feature type="sequence variant" id="VAR_044060" description="In dbSNP:rs13337278." evidence="3 4 5">
    <original>S</original>
    <variation>T</variation>
    <location>
        <position position="165"/>
    </location>
</feature>
<feature type="sequence variant" id="VAR_044061" description="In dbSNP:rs11642546." evidence="5">
    <original>P</original>
    <variation>L</variation>
    <location>
        <position position="250"/>
    </location>
</feature>
<feature type="sequence variant" id="VAR_044062" description="In dbSNP:rs3803697." evidence="5">
    <original>V</original>
    <variation>A</variation>
    <location>
        <position position="537"/>
    </location>
</feature>
<feature type="sequence variant" id="VAR_044063" description="In dbSNP:rs4984906." evidence="4">
    <original>P</original>
    <variation>T</variation>
    <location>
        <position position="1001"/>
    </location>
</feature>
<feature type="sequence variant" id="VAR_044064" description="In dbSNP:rs7190775.">
    <original>R</original>
    <variation>H</variation>
    <location>
        <position position="1492"/>
    </location>
</feature>
<feature type="sequence variant" id="VAR_044065" description="In dbSNP:rs11866949.">
    <original>C</original>
    <variation>R</variation>
    <location>
        <position position="1555"/>
    </location>
</feature>
<feature type="sequence conflict" description="In Ref. 1; BAD18654." evidence="10" ref="1">
    <original>H</original>
    <variation>Q</variation>
    <location>
        <position position="899"/>
    </location>
</feature>
<feature type="sequence conflict" description="In Ref. 1; BAD18654." evidence="10" ref="1">
    <original>P</original>
    <variation>L</variation>
    <location>
        <position position="1085"/>
    </location>
</feature>
<feature type="sequence conflict" description="In Ref. 1; BAC04225." evidence="10" ref="1">
    <original>S</original>
    <variation>P</variation>
    <location>
        <position position="1245"/>
    </location>
</feature>
<feature type="sequence conflict" description="In Ref. 1; BAC04225." evidence="10" ref="1">
    <original>E</original>
    <variation>G</variation>
    <location>
        <position position="1302"/>
    </location>
</feature>
<reference key="1">
    <citation type="journal article" date="2004" name="Nat. Genet.">
        <title>Complete sequencing and characterization of 21,243 full-length human cDNAs.</title>
        <authorList>
            <person name="Ota T."/>
            <person name="Suzuki Y."/>
            <person name="Nishikawa T."/>
            <person name="Otsuki T."/>
            <person name="Sugiyama T."/>
            <person name="Irie R."/>
            <person name="Wakamatsu A."/>
            <person name="Hayashi K."/>
            <person name="Sato H."/>
            <person name="Nagai K."/>
            <person name="Kimura K."/>
            <person name="Makita H."/>
            <person name="Sekine M."/>
            <person name="Obayashi M."/>
            <person name="Nishi T."/>
            <person name="Shibahara T."/>
            <person name="Tanaka T."/>
            <person name="Ishii S."/>
            <person name="Yamamoto J."/>
            <person name="Saito K."/>
            <person name="Kawai Y."/>
            <person name="Isono Y."/>
            <person name="Nakamura Y."/>
            <person name="Nagahari K."/>
            <person name="Murakami K."/>
            <person name="Yasuda T."/>
            <person name="Iwayanagi T."/>
            <person name="Wagatsuma M."/>
            <person name="Shiratori A."/>
            <person name="Sudo H."/>
            <person name="Hosoiri T."/>
            <person name="Kaku Y."/>
            <person name="Kodaira H."/>
            <person name="Kondo H."/>
            <person name="Sugawara M."/>
            <person name="Takahashi M."/>
            <person name="Kanda K."/>
            <person name="Yokoi T."/>
            <person name="Furuya T."/>
            <person name="Kikkawa E."/>
            <person name="Omura Y."/>
            <person name="Abe K."/>
            <person name="Kamihara K."/>
            <person name="Katsuta N."/>
            <person name="Sato K."/>
            <person name="Tanikawa M."/>
            <person name="Yamazaki M."/>
            <person name="Ninomiya K."/>
            <person name="Ishibashi T."/>
            <person name="Yamashita H."/>
            <person name="Murakawa K."/>
            <person name="Fujimori K."/>
            <person name="Tanai H."/>
            <person name="Kimata M."/>
            <person name="Watanabe M."/>
            <person name="Hiraoka S."/>
            <person name="Chiba Y."/>
            <person name="Ishida S."/>
            <person name="Ono Y."/>
            <person name="Takiguchi S."/>
            <person name="Watanabe S."/>
            <person name="Yosida M."/>
            <person name="Hotuta T."/>
            <person name="Kusano J."/>
            <person name="Kanehori K."/>
            <person name="Takahashi-Fujii A."/>
            <person name="Hara H."/>
            <person name="Tanase T.-O."/>
            <person name="Nomura Y."/>
            <person name="Togiya S."/>
            <person name="Komai F."/>
            <person name="Hara R."/>
            <person name="Takeuchi K."/>
            <person name="Arita M."/>
            <person name="Imose N."/>
            <person name="Musashino K."/>
            <person name="Yuuki H."/>
            <person name="Oshima A."/>
            <person name="Sasaki N."/>
            <person name="Aotsuka S."/>
            <person name="Yoshikawa Y."/>
            <person name="Matsunawa H."/>
            <person name="Ichihara T."/>
            <person name="Shiohata N."/>
            <person name="Sano S."/>
            <person name="Moriya S."/>
            <person name="Momiyama H."/>
            <person name="Satoh N."/>
            <person name="Takami S."/>
            <person name="Terashima Y."/>
            <person name="Suzuki O."/>
            <person name="Nakagawa S."/>
            <person name="Senoh A."/>
            <person name="Mizoguchi H."/>
            <person name="Goto Y."/>
            <person name="Shimizu F."/>
            <person name="Wakebe H."/>
            <person name="Hishigaki H."/>
            <person name="Watanabe T."/>
            <person name="Sugiyama A."/>
            <person name="Takemoto M."/>
            <person name="Kawakami B."/>
            <person name="Yamazaki M."/>
            <person name="Watanabe K."/>
            <person name="Kumagai A."/>
            <person name="Itakura S."/>
            <person name="Fukuzumi Y."/>
            <person name="Fujimori Y."/>
            <person name="Komiyama M."/>
            <person name="Tashiro H."/>
            <person name="Tanigami A."/>
            <person name="Fujiwara T."/>
            <person name="Ono T."/>
            <person name="Yamada K."/>
            <person name="Fujii Y."/>
            <person name="Ozaki K."/>
            <person name="Hirao M."/>
            <person name="Ohmori Y."/>
            <person name="Kawabata A."/>
            <person name="Hikiji T."/>
            <person name="Kobatake N."/>
            <person name="Inagaki H."/>
            <person name="Ikema Y."/>
            <person name="Okamoto S."/>
            <person name="Okitani R."/>
            <person name="Kawakami T."/>
            <person name="Noguchi S."/>
            <person name="Itoh T."/>
            <person name="Shigeta K."/>
            <person name="Senba T."/>
            <person name="Matsumura K."/>
            <person name="Nakajima Y."/>
            <person name="Mizuno T."/>
            <person name="Morinaga M."/>
            <person name="Sasaki M."/>
            <person name="Togashi T."/>
            <person name="Oyama M."/>
            <person name="Hata H."/>
            <person name="Watanabe M."/>
            <person name="Komatsu T."/>
            <person name="Mizushima-Sugano J."/>
            <person name="Satoh T."/>
            <person name="Shirai Y."/>
            <person name="Takahashi Y."/>
            <person name="Nakagawa K."/>
            <person name="Okumura K."/>
            <person name="Nagase T."/>
            <person name="Nomura N."/>
            <person name="Kikuchi H."/>
            <person name="Masuho Y."/>
            <person name="Yamashita R."/>
            <person name="Nakai K."/>
            <person name="Yada T."/>
            <person name="Nakamura Y."/>
            <person name="Ohara O."/>
            <person name="Isogai T."/>
            <person name="Sugano S."/>
        </authorList>
    </citation>
    <scope>NUCLEOTIDE SEQUENCE [LARGE SCALE MRNA] (ISOFORMS 1 AND 2)</scope>
    <scope>VARIANTS THR-165 AND THR-1001</scope>
    <source>
        <tissue>Cerebellum</tissue>
        <tissue>Thymus</tissue>
        <tissue>Uterus</tissue>
    </source>
</reference>
<reference key="2">
    <citation type="journal article" date="2001" name="Hum. Mol. Genet.">
        <title>Sequence, structure and pathology of the fully annotated terminal 2 Mb of the short arm of human chromosome 16.</title>
        <authorList>
            <person name="Daniels R.J."/>
            <person name="Peden J.F."/>
            <person name="Lloyd C."/>
            <person name="Horsley S.W."/>
            <person name="Clark K."/>
            <person name="Tufarelli C."/>
            <person name="Kearney L."/>
            <person name="Buckle V.J."/>
            <person name="Doggett N.A."/>
            <person name="Flint J."/>
            <person name="Higgs D.R."/>
        </authorList>
    </citation>
    <scope>NUCLEOTIDE SEQUENCE [LARGE SCALE GENOMIC DNA]</scope>
</reference>
<reference key="3">
    <citation type="journal article" date="2004" name="Nature">
        <title>The sequence and analysis of duplication-rich human chromosome 16.</title>
        <authorList>
            <person name="Martin J."/>
            <person name="Han C."/>
            <person name="Gordon L.A."/>
            <person name="Terry A."/>
            <person name="Prabhakar S."/>
            <person name="She X."/>
            <person name="Xie G."/>
            <person name="Hellsten U."/>
            <person name="Chan Y.M."/>
            <person name="Altherr M."/>
            <person name="Couronne O."/>
            <person name="Aerts A."/>
            <person name="Bajorek E."/>
            <person name="Black S."/>
            <person name="Blumer H."/>
            <person name="Branscomb E."/>
            <person name="Brown N.C."/>
            <person name="Bruno W.J."/>
            <person name="Buckingham J.M."/>
            <person name="Callen D.F."/>
            <person name="Campbell C.S."/>
            <person name="Campbell M.L."/>
            <person name="Campbell E.W."/>
            <person name="Caoile C."/>
            <person name="Challacombe J.F."/>
            <person name="Chasteen L.A."/>
            <person name="Chertkov O."/>
            <person name="Chi H.C."/>
            <person name="Christensen M."/>
            <person name="Clark L.M."/>
            <person name="Cohn J.D."/>
            <person name="Denys M."/>
            <person name="Detter J.C."/>
            <person name="Dickson M."/>
            <person name="Dimitrijevic-Bussod M."/>
            <person name="Escobar J."/>
            <person name="Fawcett J.J."/>
            <person name="Flowers D."/>
            <person name="Fotopulos D."/>
            <person name="Glavina T."/>
            <person name="Gomez M."/>
            <person name="Gonzales E."/>
            <person name="Goodstein D."/>
            <person name="Goodwin L.A."/>
            <person name="Grady D.L."/>
            <person name="Grigoriev I."/>
            <person name="Groza M."/>
            <person name="Hammon N."/>
            <person name="Hawkins T."/>
            <person name="Haydu L."/>
            <person name="Hildebrand C.E."/>
            <person name="Huang W."/>
            <person name="Israni S."/>
            <person name="Jett J."/>
            <person name="Jewett P.B."/>
            <person name="Kadner K."/>
            <person name="Kimball H."/>
            <person name="Kobayashi A."/>
            <person name="Krawczyk M.-C."/>
            <person name="Leyba T."/>
            <person name="Longmire J.L."/>
            <person name="Lopez F."/>
            <person name="Lou Y."/>
            <person name="Lowry S."/>
            <person name="Ludeman T."/>
            <person name="Manohar C.F."/>
            <person name="Mark G.A."/>
            <person name="McMurray K.L."/>
            <person name="Meincke L.J."/>
            <person name="Morgan J."/>
            <person name="Moyzis R.K."/>
            <person name="Mundt M.O."/>
            <person name="Munk A.C."/>
            <person name="Nandkeshwar R.D."/>
            <person name="Pitluck S."/>
            <person name="Pollard M."/>
            <person name="Predki P."/>
            <person name="Parson-Quintana B."/>
            <person name="Ramirez L."/>
            <person name="Rash S."/>
            <person name="Retterer J."/>
            <person name="Ricke D.O."/>
            <person name="Robinson D.L."/>
            <person name="Rodriguez A."/>
            <person name="Salamov A."/>
            <person name="Saunders E.H."/>
            <person name="Scott D."/>
            <person name="Shough T."/>
            <person name="Stallings R.L."/>
            <person name="Stalvey M."/>
            <person name="Sutherland R.D."/>
            <person name="Tapia R."/>
            <person name="Tesmer J.G."/>
            <person name="Thayer N."/>
            <person name="Thompson L.S."/>
            <person name="Tice H."/>
            <person name="Torney D.C."/>
            <person name="Tran-Gyamfi M."/>
            <person name="Tsai M."/>
            <person name="Ulanovsky L.E."/>
            <person name="Ustaszewska A."/>
            <person name="Vo N."/>
            <person name="White P.S."/>
            <person name="Williams A.L."/>
            <person name="Wills P.L."/>
            <person name="Wu J.-R."/>
            <person name="Wu K."/>
            <person name="Yang J."/>
            <person name="DeJong P."/>
            <person name="Bruce D."/>
            <person name="Doggett N.A."/>
            <person name="Deaven L."/>
            <person name="Schmutz J."/>
            <person name="Grimwood J."/>
            <person name="Richardson P."/>
            <person name="Rokhsar D.S."/>
            <person name="Eichler E.E."/>
            <person name="Gilna P."/>
            <person name="Lucas S.M."/>
            <person name="Myers R.M."/>
            <person name="Rubin E.M."/>
            <person name="Pennacchio L.A."/>
        </authorList>
    </citation>
    <scope>NUCLEOTIDE SEQUENCE [LARGE SCALE GENOMIC DNA]</scope>
</reference>
<reference key="4">
    <citation type="submission" date="2005-09" db="EMBL/GenBank/DDBJ databases">
        <authorList>
            <person name="Mural R.J."/>
            <person name="Istrail S."/>
            <person name="Sutton G.G."/>
            <person name="Florea L."/>
            <person name="Halpern A.L."/>
            <person name="Mobarry C.M."/>
            <person name="Lippert R."/>
            <person name="Walenz B."/>
            <person name="Shatkay H."/>
            <person name="Dew I."/>
            <person name="Miller J.R."/>
            <person name="Flanigan M.J."/>
            <person name="Edwards N.J."/>
            <person name="Bolanos R."/>
            <person name="Fasulo D."/>
            <person name="Halldorsson B.V."/>
            <person name="Hannenhalli S."/>
            <person name="Turner R."/>
            <person name="Yooseph S."/>
            <person name="Lu F."/>
            <person name="Nusskern D.R."/>
            <person name="Shue B.C."/>
            <person name="Zheng X.H."/>
            <person name="Zhong F."/>
            <person name="Delcher A.L."/>
            <person name="Huson D.H."/>
            <person name="Kravitz S.A."/>
            <person name="Mouchard L."/>
            <person name="Reinert K."/>
            <person name="Remington K.A."/>
            <person name="Clark A.G."/>
            <person name="Waterman M.S."/>
            <person name="Eichler E.E."/>
            <person name="Adams M.D."/>
            <person name="Hunkapiller M.W."/>
            <person name="Myers E.W."/>
            <person name="Venter J.C."/>
        </authorList>
    </citation>
    <scope>NUCLEOTIDE SEQUENCE [LARGE SCALE GENOMIC DNA]</scope>
</reference>
<reference key="5">
    <citation type="journal article" date="2004" name="Genome Res.">
        <title>The status, quality, and expansion of the NIH full-length cDNA project: the Mammalian Gene Collection (MGC).</title>
        <authorList>
            <consortium name="The MGC Project Team"/>
        </authorList>
    </citation>
    <scope>NUCLEOTIDE SEQUENCE [LARGE SCALE MRNA] (ISOFORMS 3; 4 AND 5)</scope>
    <scope>VARIANTS THR-165; LEU-250 AND ALA-537</scope>
    <source>
        <tissue>Brain</tissue>
    </source>
</reference>
<reference key="6">
    <citation type="journal article" date="2001" name="DNA Res.">
        <title>Prediction of the coding sequences of unidentified human genes. XXI. The complete sequences of 60 new cDNA clones from brain which code for large proteins.</title>
        <authorList>
            <person name="Nagase T."/>
            <person name="Kikuno R."/>
            <person name="Ohara O."/>
        </authorList>
    </citation>
    <scope>NUCLEOTIDE SEQUENCE [LARGE SCALE MRNA] OF 1-1138 (ISOFORM 1)</scope>
    <scope>VARIANT THR-165</scope>
    <source>
        <tissue>Brain</tissue>
    </source>
</reference>
<reference key="7">
    <citation type="journal article" date="2017" name="Curr. Biol.">
        <title>Identification of chlamydomonas central core centriolar proteins reveals a role for human WDR90 in ciliogenesis.</title>
        <authorList>
            <person name="Hamel V."/>
            <person name="Steib E."/>
            <person name="Hamelin R."/>
            <person name="Armand F."/>
            <person name="Borgers S."/>
            <person name="Flueckiger I."/>
            <person name="Busso C."/>
            <person name="Olieric N."/>
            <person name="Sorzano C.O.S."/>
            <person name="Steinmetz M.O."/>
            <person name="Guichard P."/>
            <person name="Goenczy P."/>
        </authorList>
    </citation>
    <scope>FUNCTION</scope>
    <scope>SUBCELLULAR LOCATION</scope>
</reference>
<reference key="8">
    <citation type="journal article" date="2020" name="Elife">
        <title>WDR90 is a centriolar microtubule wall protein important for centriole architecture integrity.</title>
        <authorList>
            <person name="Steib E."/>
            <person name="Laporte M.H."/>
            <person name="Gambarotto D."/>
            <person name="Olieric N."/>
            <person name="Zheng C."/>
            <person name="Borgers S."/>
            <person name="Olieric V."/>
            <person name="Le Guennec M."/>
            <person name="Koll F."/>
            <person name="Tassin A.M."/>
            <person name="Steinmetz M.O."/>
            <person name="Guichard P."/>
            <person name="Hamel V."/>
        </authorList>
    </citation>
    <scope>FUNCTION</scope>
    <scope>SUBCELLULAR LOCATION</scope>
    <scope>MICROTUBULES-BINDING REGION</scope>
</reference>
<sequence length="1748" mass="187437">MARAWQHPFLNVFRHFRVDEWKRSAKQGDVAVVTDKTLKGAVYRIRGSVSAANYIQLPKSSTQSLGLTGRYLYVLFRPLPSKHFVIHLDVSSKDNQVIRVSFSNLFKEFKSTATWLQFPLVLEARTPQRDLVGLAPSGARWTCLQLDLQDVLLVYLNRCYGHLKSIRLCASLLVRNLYTSDLCFEPAISGAQWAKLPVTPMPREMAFPVPKGESWHDRYIHVRFPSESLKVPSKPIEKSCSPPEAVLLGPGPQPLPCPVASSKPVRFSVSPVVQTPSPTASGRAALAPRPFPEVSLSQERSDASNADGPGFHSLEPWAQLEASDIHTAAAGTHVLTHESAEVPVARTGSCEGFLPDPVLRLKGVIGFGGHGTRQALWTPDGAAVVYPCHAVIVVLLVDTGEQRFFLGHTDKVSALALDGSSSLLASAQARAPSVMRLWDFQTGRCLCLFRSPMHVVCSLSFSDSGALLCGVGKDHHGRTMVVAWGTGQVGLGGEVVVLAKAHTDFDVQAFRVTFFDETRMASCGQGSVRLWRLRGGVLRSCPVDLGEHHALQFTDLAFKQARDGCPEPSAAMLFVCSRSGHILEIDCQRMVVRHARRLLPTRTPGGPHPQKQTFSSGPGIAISSLSVSPAMCAVGSEDGFLRLWPLDFSSVLLEAEHEGPVSSVCVSPDGLRVLSATSSGHLGFLDTLSRVYHMLARSHTAPVLALAMEQRRGQLATVSQDRTVRIWDLATLQQLYDFTSSEDAPCAVTFHPTRPTFFCGFSSGAVRSFSLEAAEVLVEHTCHRGAVTGLTATPDGRLLFSSCSQGSLAQYSCADPQWHVLRVAADMVCPDAPASPSALAVSRDGRLLAFVGPSRCTVTVMGSASLDELLRVDIGTLDLASSRLDSAMAVCFGPAALGHLLVSTSSNRVVVLDAVSGRIIRELPGVHPEPCPSLTLSEDARFLLIAAGRTIKVWDYATQASPGPQVYIGHSEPVQAVAFSPDQQQVLSAGDAVFLWDVLAPTESDQSFPGAPPACKTGPGAGPLEDAASRASELPRQQVPKPCQASPPRLGVCARPPEGGDGARDTRNSGAPRTTYLASCKAFTPARVSCSPHSAKGTCPPPASGGWLRLKAVVGYSGNGRANMVWRPDTGFFAYTCGRLVVVEDLHSGAQQHWSGHSAEISTLALSHSAQVLASASGRSSTTAHCQIRVWDVSGGLCQHLIFPHSTTVLALAFSPDDRLLVTLGDHDGRTLALWGTATYDLVSSTRLPEPVHGVAFNPWDAGELTCVGQGTVTFWLLQQRGADISLQVRREPVPEAVGAGELTSLCYGAPPLLYCGTSSGQVCVWDTRAGRCFLSWEADDGGIGLLLFSGSRLVSGSSTGRLRLWAVGAVSELRCKGSGASSVFMEHELVLDGAVVSASFDDSVDMGVVGTTAGTLWFVSWAEGTSTRLISGHRSKVNEVVFSPGESHCATCSEDGSVRVWALASMELVIQFQVLNQSCLCLAWSPPCCGRPEQQRLAAGYGDGSLRIFSVSRTAMELKMHPHPVALTTVAFSTDGQTVLSGDKDGLVAVSHPCTGTTFRVLSDHQGAPISTICVTCKECEDLGVEGTDLWLAASGDQRVSVWASDWLRNHCELVDWLSFPMPATTETQGHLPPSLAAFCPWDGALLMYVGPGVYKEVIIYNLCQKQVVEKIPLPFFAMSLSLSPGTHLLAVGFAECMLRLVDCAMGTAQDFAGHDNAVHLCRFTPSARLLFTAARNEILVWEVPGL</sequence>
<evidence type="ECO:0000250" key="1">
    <source>
        <dbReference type="UniProtKB" id="Q6ZPG2"/>
    </source>
</evidence>
<evidence type="ECO:0000256" key="2">
    <source>
        <dbReference type="SAM" id="MobiDB-lite"/>
    </source>
</evidence>
<evidence type="ECO:0000269" key="3">
    <source>
    </source>
</evidence>
<evidence type="ECO:0000269" key="4">
    <source>
    </source>
</evidence>
<evidence type="ECO:0000269" key="5">
    <source>
    </source>
</evidence>
<evidence type="ECO:0000269" key="6">
    <source>
    </source>
</evidence>
<evidence type="ECO:0000269" key="7">
    <source>
    </source>
</evidence>
<evidence type="ECO:0000303" key="8">
    <source>
    </source>
</evidence>
<evidence type="ECO:0000303" key="9">
    <source>
    </source>
</evidence>
<evidence type="ECO:0000305" key="10"/>
<keyword id="KW-0025">Alternative splicing</keyword>
<keyword id="KW-0970">Cilium biogenesis/degradation</keyword>
<keyword id="KW-0963">Cytoplasm</keyword>
<keyword id="KW-0206">Cytoskeleton</keyword>
<keyword id="KW-0493">Microtubule</keyword>
<keyword id="KW-0597">Phosphoprotein</keyword>
<keyword id="KW-1267">Proteomics identification</keyword>
<keyword id="KW-1185">Reference proteome</keyword>
<keyword id="KW-0677">Repeat</keyword>
<keyword id="KW-0853">WD repeat</keyword>
<organism>
    <name type="scientific">Homo sapiens</name>
    <name type="common">Human</name>
    <dbReference type="NCBI Taxonomy" id="9606"/>
    <lineage>
        <taxon>Eukaryota</taxon>
        <taxon>Metazoa</taxon>
        <taxon>Chordata</taxon>
        <taxon>Craniata</taxon>
        <taxon>Vertebrata</taxon>
        <taxon>Euteleostomi</taxon>
        <taxon>Mammalia</taxon>
        <taxon>Eutheria</taxon>
        <taxon>Euarchontoglires</taxon>
        <taxon>Primates</taxon>
        <taxon>Haplorrhini</taxon>
        <taxon>Catarrhini</taxon>
        <taxon>Hominidae</taxon>
        <taxon>Homo</taxon>
    </lineage>
</organism>
<comment type="function">
    <text evidence="6">Microtubule-binding protein that plays a crucial role in ensuring inner core protein localization within the centriole core, as well as in maintaining the microtubule wall integrity and the overall centriole roundness and stability (PubMed:32946374). Required for efficient primary cilium formation (PubMed:28781053).</text>
</comment>
<comment type="interaction">
    <interactant intactId="EBI-9478492">
        <id>Q96KV7</id>
    </interactant>
    <interactant intactId="EBI-740322">
        <id>Q93062</id>
        <label>RBPMS</label>
    </interactant>
    <organismsDiffer>false</organismsDiffer>
    <experiments>3</experiments>
</comment>
<comment type="subcellular location">
    <subcellularLocation>
        <location evidence="6 7">Cytoplasm</location>
        <location evidence="6 7">Cytoskeleton</location>
        <location evidence="6 7">Microtubule organizing center</location>
        <location evidence="6 7">Centrosome</location>
        <location evidence="6 7">Centriole</location>
    </subcellularLocation>
    <subcellularLocation>
        <location evidence="7">Cytoplasm</location>
        <location evidence="7">Cytoskeleton</location>
        <location evidence="7">Microtubule organizing center</location>
        <location evidence="7">Centrosome</location>
        <location evidence="7">Centriolar satellite</location>
    </subcellularLocation>
    <text evidence="7">Localizes to the microtubule triplets in the central core region of centrioles and localizes to centriolar satellite in a PCM1-dependent manner.</text>
</comment>
<comment type="alternative products">
    <event type="alternative splicing"/>
    <isoform>
        <id>Q96KV7-1</id>
        <name>1</name>
        <sequence type="displayed"/>
    </isoform>
    <isoform>
        <id>Q96KV7-10</id>
        <name>2</name>
        <sequence type="described" ref="VSP_034290 VSP_034303 VSP_041087 VSP_041088"/>
    </isoform>
    <isoform>
        <id>Q96KV7-3</id>
        <name>3</name>
        <sequence type="described" ref="VSP_034298 VSP_034300"/>
    </isoform>
    <isoform>
        <id>Q96KV7-7</id>
        <name>4</name>
        <sequence type="described" ref="VSP_034290 VSP_034303 VSP_034306"/>
    </isoform>
    <isoform>
        <id>Q96KV7-5</id>
        <name>5</name>
        <sequence type="described" ref="VSP_034294 VSP_034298 VSP_034300"/>
    </isoform>
</comment>
<comment type="miscellaneous">
    <molecule>Isoform 2</molecule>
    <text evidence="10">May be produced at very low levels due to a premature stop codon in the mRNA, leading to nonsense-mediated mRNA decay.</text>
</comment>
<comment type="similarity">
    <text evidence="10">Belongs to the WD repeat WDR90/POC16 family.</text>
</comment>
<comment type="sequence caution" evidence="10">
    <conflict type="erroneous gene model prediction">
        <sequence resource="EMBL-CDS" id="AAK61239"/>
    </conflict>
</comment>
<comment type="sequence caution" evidence="10">
    <conflict type="miscellaneous discrepancy">
        <sequence resource="EMBL-CDS" id="BAB67817"/>
    </conflict>
    <text>Intron retention.</text>
</comment>
<comment type="sequence caution" evidence="10">
    <conflict type="miscellaneous discrepancy">
        <sequence resource="EMBL-CDS" id="BAC03575"/>
    </conflict>
    <text>Unlikely isoform. Aberrant splicing.</text>
</comment>
<comment type="sequence caution" evidence="10">
    <conflict type="erroneous initiation">
        <sequence resource="EMBL-CDS" id="BAC04225"/>
    </conflict>
    <text>Truncated N-terminus.</text>
</comment>
<comment type="sequence caution" evidence="10">
    <conflict type="miscellaneous discrepancy">
        <sequence resource="EMBL-CDS" id="BAC04225"/>
    </conflict>
    <text>Probable cloning artifact.</text>
</comment>
<comment type="sequence caution" evidence="10">
    <conflict type="miscellaneous discrepancy">
        <sequence resource="EMBL-CDS" id="BAD18654"/>
    </conflict>
    <text>Probable cloning artifact.</text>
</comment>
<comment type="sequence caution" evidence="10">
    <conflict type="erroneous gene model prediction">
        <sequence resource="EMBL-CDS" id="EAW85775"/>
    </conflict>
</comment>
<comment type="sequence caution" evidence="10">
    <molecule>Isoform 2</molecule>
    <conflict type="erroneous termination">
        <sequence resource="EMBL-CDS" id="BAC04205"/>
    </conflict>
    <text>Truncated C-terminus.</text>
</comment>
<comment type="sequence caution" evidence="10">
    <molecule>Isoform 3</molecule>
    <conflict type="frameshift">
        <sequence resource="EMBL-CDS" id="AAI21187"/>
    </conflict>
</comment>
<comment type="sequence caution" evidence="10">
    <molecule>Isoform 5</molecule>
    <conflict type="frameshift">
        <sequence resource="EMBL-CDS" id="AAI21186"/>
    </conflict>
</comment>
<name>WDR90_HUMAN</name>
<accession>Q96KV7</accession>
<accession>Q0VA87</accession>
<accession>Q0VA88</accession>
<accession>Q6P048</accession>
<accession>Q6ZMS1</accession>
<accession>Q6ZTH1</accession>
<accession>Q8N202</accession>
<accession>Q8N221</accession>
<accession>Q8NBB8</accession>
<accession>Q96PW4</accession>
<accession>Q96S18</accession>
<proteinExistence type="evidence at protein level"/>
<dbReference type="EMBL" id="AK091062">
    <property type="protein sequence ID" value="BAC03575.1"/>
    <property type="status" value="ALT_SEQ"/>
    <property type="molecule type" value="mRNA"/>
</dbReference>
<dbReference type="EMBL" id="AK093609">
    <property type="protein sequence ID" value="BAC04205.1"/>
    <property type="status" value="ALT_SEQ"/>
    <property type="molecule type" value="mRNA"/>
</dbReference>
<dbReference type="EMBL" id="AK093802">
    <property type="protein sequence ID" value="BAC04225.1"/>
    <property type="status" value="ALT_SEQ"/>
    <property type="molecule type" value="mRNA"/>
</dbReference>
<dbReference type="EMBL" id="AK131510">
    <property type="protein sequence ID" value="BAD18654.1"/>
    <property type="status" value="ALT_SEQ"/>
    <property type="molecule type" value="mRNA"/>
</dbReference>
<dbReference type="EMBL" id="AE006464">
    <property type="protein sequence ID" value="AAK61239.1"/>
    <property type="status" value="ALT_SEQ"/>
    <property type="molecule type" value="Genomic_DNA"/>
</dbReference>
<dbReference type="EMBL" id="AL022341">
    <property type="status" value="NOT_ANNOTATED_CDS"/>
    <property type="molecule type" value="Genomic_DNA"/>
</dbReference>
<dbReference type="EMBL" id="Z92544">
    <property type="status" value="NOT_ANNOTATED_CDS"/>
    <property type="molecule type" value="Genomic_DNA"/>
</dbReference>
<dbReference type="EMBL" id="CH471112">
    <property type="protein sequence ID" value="EAW85775.1"/>
    <property type="status" value="ALT_SEQ"/>
    <property type="molecule type" value="Genomic_DNA"/>
</dbReference>
<dbReference type="EMBL" id="BC065836">
    <property type="protein sequence ID" value="AAH65836.1"/>
    <property type="molecule type" value="mRNA"/>
</dbReference>
<dbReference type="EMBL" id="BC121185">
    <property type="protein sequence ID" value="AAI21186.1"/>
    <property type="status" value="ALT_FRAME"/>
    <property type="molecule type" value="mRNA"/>
</dbReference>
<dbReference type="EMBL" id="BC121186">
    <property type="protein sequence ID" value="AAI21187.1"/>
    <property type="status" value="ALT_FRAME"/>
    <property type="molecule type" value="mRNA"/>
</dbReference>
<dbReference type="EMBL" id="AB067511">
    <property type="protein sequence ID" value="BAB67817.1"/>
    <property type="status" value="ALT_SEQ"/>
    <property type="molecule type" value="mRNA"/>
</dbReference>
<dbReference type="CCDS" id="CCDS42092.1">
    <molecule id="Q96KV7-1"/>
</dbReference>
<dbReference type="RefSeq" id="NP_660337.3">
    <molecule id="Q96KV7-1"/>
    <property type="nucleotide sequence ID" value="NM_145294.4"/>
</dbReference>
<dbReference type="BioGRID" id="128250">
    <property type="interactions" value="55"/>
</dbReference>
<dbReference type="FunCoup" id="Q96KV7">
    <property type="interactions" value="504"/>
</dbReference>
<dbReference type="IntAct" id="Q96KV7">
    <property type="interactions" value="41"/>
</dbReference>
<dbReference type="MINT" id="Q96KV7"/>
<dbReference type="STRING" id="9606.ENSP00000293879"/>
<dbReference type="GlyGen" id="Q96KV7">
    <property type="glycosylation" value="1 site"/>
</dbReference>
<dbReference type="iPTMnet" id="Q96KV7"/>
<dbReference type="PhosphoSitePlus" id="Q96KV7"/>
<dbReference type="BioMuta" id="WDR90"/>
<dbReference type="DMDM" id="190423649"/>
<dbReference type="jPOST" id="Q96KV7"/>
<dbReference type="MassIVE" id="Q96KV7"/>
<dbReference type="PaxDb" id="9606-ENSP00000293879"/>
<dbReference type="PeptideAtlas" id="Q96KV7"/>
<dbReference type="ProteomicsDB" id="77120">
    <molecule id="Q96KV7-1"/>
</dbReference>
<dbReference type="ProteomicsDB" id="77122">
    <molecule id="Q96KV7-3"/>
</dbReference>
<dbReference type="ProteomicsDB" id="77123">
    <molecule id="Q96KV7-5"/>
</dbReference>
<dbReference type="ProteomicsDB" id="77124">
    <molecule id="Q96KV7-7"/>
</dbReference>
<dbReference type="Antibodypedia" id="70705">
    <property type="antibodies" value="23 antibodies from 8 providers"/>
</dbReference>
<dbReference type="DNASU" id="197335"/>
<dbReference type="Ensembl" id="ENST00000293879.9">
    <molecule id="Q96KV7-1"/>
    <property type="protein sequence ID" value="ENSP00000293879.4"/>
    <property type="gene ID" value="ENSG00000161996.19"/>
</dbReference>
<dbReference type="Ensembl" id="ENST00000315764.8">
    <molecule id="Q96KV7-7"/>
    <property type="protein sequence ID" value="ENSP00000322808.4"/>
    <property type="gene ID" value="ENSG00000161996.19"/>
</dbReference>
<dbReference type="GeneID" id="197335"/>
<dbReference type="KEGG" id="hsa:197335"/>
<dbReference type="MANE-Select" id="ENST00000293879.9">
    <property type="protein sequence ID" value="ENSP00000293879.4"/>
    <property type="RefSeq nucleotide sequence ID" value="NM_145294.5"/>
    <property type="RefSeq protein sequence ID" value="NP_660337.3"/>
</dbReference>
<dbReference type="UCSC" id="uc002cii.2">
    <molecule id="Q96KV7-1"/>
    <property type="organism name" value="human"/>
</dbReference>
<dbReference type="AGR" id="HGNC:26960"/>
<dbReference type="CTD" id="197335"/>
<dbReference type="DisGeNET" id="197335"/>
<dbReference type="GeneCards" id="WDR90"/>
<dbReference type="HGNC" id="HGNC:26960">
    <property type="gene designation" value="WDR90"/>
</dbReference>
<dbReference type="HPA" id="ENSG00000161996">
    <property type="expression patterns" value="Tissue enhanced (testis)"/>
</dbReference>
<dbReference type="MalaCards" id="WDR90"/>
<dbReference type="MIM" id="618290">
    <property type="type" value="gene"/>
</dbReference>
<dbReference type="neXtProt" id="NX_Q96KV7"/>
<dbReference type="OpenTargets" id="ENSG00000161996"/>
<dbReference type="PharmGKB" id="PA145147652"/>
<dbReference type="VEuPathDB" id="HostDB:ENSG00000161996"/>
<dbReference type="eggNOG" id="KOG0266">
    <property type="taxonomic scope" value="Eukaryota"/>
</dbReference>
<dbReference type="eggNOG" id="KOG0318">
    <property type="taxonomic scope" value="Eukaryota"/>
</dbReference>
<dbReference type="eggNOG" id="KOG3213">
    <property type="taxonomic scope" value="Eukaryota"/>
</dbReference>
<dbReference type="GeneTree" id="ENSGT00940000160173"/>
<dbReference type="HOGENOM" id="CLU_081013_0_0_1"/>
<dbReference type="InParanoid" id="Q96KV7"/>
<dbReference type="OrthoDB" id="6252103at2759"/>
<dbReference type="PAN-GO" id="Q96KV7">
    <property type="GO annotations" value="2 GO annotations based on evolutionary models"/>
</dbReference>
<dbReference type="PhylomeDB" id="Q96KV7"/>
<dbReference type="TreeFam" id="TF329419"/>
<dbReference type="PathwayCommons" id="Q96KV7"/>
<dbReference type="SignaLink" id="Q96KV7"/>
<dbReference type="BioGRID-ORCS" id="197335">
    <property type="hits" value="16 hits in 1153 CRISPR screens"/>
</dbReference>
<dbReference type="ChiTaRS" id="WDR90">
    <property type="organism name" value="human"/>
</dbReference>
<dbReference type="GenomeRNAi" id="197335"/>
<dbReference type="Pharos" id="Q96KV7">
    <property type="development level" value="Tdark"/>
</dbReference>
<dbReference type="PRO" id="PR:Q96KV7"/>
<dbReference type="Proteomes" id="UP000005640">
    <property type="component" value="Chromosome 16"/>
</dbReference>
<dbReference type="RNAct" id="Q96KV7">
    <property type="molecule type" value="protein"/>
</dbReference>
<dbReference type="Bgee" id="ENSG00000161996">
    <property type="expression patterns" value="Expressed in right uterine tube and 147 other cell types or tissues"/>
</dbReference>
<dbReference type="ExpressionAtlas" id="Q96KV7">
    <property type="expression patterns" value="baseline and differential"/>
</dbReference>
<dbReference type="GO" id="GO:0034451">
    <property type="term" value="C:centriolar satellite"/>
    <property type="evidence" value="ECO:0000314"/>
    <property type="project" value="UniProtKB"/>
</dbReference>
<dbReference type="GO" id="GO:0005814">
    <property type="term" value="C:centriole"/>
    <property type="evidence" value="ECO:0000314"/>
    <property type="project" value="UniProtKB"/>
</dbReference>
<dbReference type="GO" id="GO:0005813">
    <property type="term" value="C:centrosome"/>
    <property type="evidence" value="ECO:0000314"/>
    <property type="project" value="HPA"/>
</dbReference>
<dbReference type="GO" id="GO:0036064">
    <property type="term" value="C:ciliary basal body"/>
    <property type="evidence" value="ECO:0000314"/>
    <property type="project" value="HPA"/>
</dbReference>
<dbReference type="GO" id="GO:0005737">
    <property type="term" value="C:cytoplasm"/>
    <property type="evidence" value="ECO:0007669"/>
    <property type="project" value="UniProtKB-KW"/>
</dbReference>
<dbReference type="GO" id="GO:0005874">
    <property type="term" value="C:microtubule"/>
    <property type="evidence" value="ECO:0007669"/>
    <property type="project" value="UniProtKB-KW"/>
</dbReference>
<dbReference type="GO" id="GO:0005886">
    <property type="term" value="C:plasma membrane"/>
    <property type="evidence" value="ECO:0000314"/>
    <property type="project" value="HPA"/>
</dbReference>
<dbReference type="GO" id="GO:0008017">
    <property type="term" value="F:microtubule binding"/>
    <property type="evidence" value="ECO:0000314"/>
    <property type="project" value="UniProtKB"/>
</dbReference>
<dbReference type="GO" id="GO:0061511">
    <property type="term" value="P:centriole elongation"/>
    <property type="evidence" value="ECO:0000315"/>
    <property type="project" value="UniProtKB"/>
</dbReference>
<dbReference type="GO" id="GO:0060271">
    <property type="term" value="P:cilium assembly"/>
    <property type="evidence" value="ECO:0000315"/>
    <property type="project" value="UniProtKB"/>
</dbReference>
<dbReference type="FunFam" id="2.130.10.10:FF:000522">
    <property type="entry name" value="WD repeat domain 90"/>
    <property type="match status" value="1"/>
</dbReference>
<dbReference type="FunFam" id="2.130.10.10:FF:000590">
    <property type="entry name" value="WD repeat domain 90"/>
    <property type="match status" value="1"/>
</dbReference>
<dbReference type="FunFam" id="2.130.10.10:FF:000742">
    <property type="entry name" value="WD repeat domain 90"/>
    <property type="match status" value="1"/>
</dbReference>
<dbReference type="FunFam" id="2.130.10.10:FF:000772">
    <property type="entry name" value="WD repeat domain 90"/>
    <property type="match status" value="1"/>
</dbReference>
<dbReference type="FunFam" id="2.130.10.10:FF:000865">
    <property type="entry name" value="WD repeat domain 90"/>
    <property type="match status" value="1"/>
</dbReference>
<dbReference type="FunFam" id="2.130.10.10:FF:000974">
    <property type="entry name" value="WD repeat domain 90"/>
    <property type="match status" value="1"/>
</dbReference>
<dbReference type="FunFam" id="2.130.10.10:FF:001103">
    <property type="entry name" value="WD repeat domain 90"/>
    <property type="match status" value="1"/>
</dbReference>
<dbReference type="Gene3D" id="2.130.10.10">
    <property type="entry name" value="YVTN repeat-like/Quinoprotein amine dehydrogenase"/>
    <property type="match status" value="7"/>
</dbReference>
<dbReference type="InterPro" id="IPR055441">
    <property type="entry name" value="Beta-prop_WDR90_POC16_2nd"/>
</dbReference>
<dbReference type="InterPro" id="IPR007714">
    <property type="entry name" value="CFA20_dom"/>
</dbReference>
<dbReference type="InterPro" id="IPR011047">
    <property type="entry name" value="Quinoprotein_ADH-like_sf"/>
</dbReference>
<dbReference type="InterPro" id="IPR015943">
    <property type="entry name" value="WD40/YVTN_repeat-like_dom_sf"/>
</dbReference>
<dbReference type="InterPro" id="IPR019775">
    <property type="entry name" value="WD40_repeat_CS"/>
</dbReference>
<dbReference type="InterPro" id="IPR036322">
    <property type="entry name" value="WD40_repeat_dom_sf"/>
</dbReference>
<dbReference type="InterPro" id="IPR001680">
    <property type="entry name" value="WD40_rpt"/>
</dbReference>
<dbReference type="InterPro" id="IPR050630">
    <property type="entry name" value="WD_repeat_EMAP"/>
</dbReference>
<dbReference type="InterPro" id="IPR055440">
    <property type="entry name" value="WDR90_beta-prop_4th"/>
</dbReference>
<dbReference type="PANTHER" id="PTHR13720:SF24">
    <property type="entry name" value="WD REPEAT-CONTAINING PROTEIN 90"/>
    <property type="match status" value="1"/>
</dbReference>
<dbReference type="PANTHER" id="PTHR13720">
    <property type="entry name" value="WD-40 REPEAT PROTEIN"/>
    <property type="match status" value="1"/>
</dbReference>
<dbReference type="Pfam" id="PF23393">
    <property type="entry name" value="Beta-prop_WDR90_POC16_2nd"/>
    <property type="match status" value="1"/>
</dbReference>
<dbReference type="Pfam" id="PF05018">
    <property type="entry name" value="CFA20_dom"/>
    <property type="match status" value="1"/>
</dbReference>
<dbReference type="Pfam" id="PF00400">
    <property type="entry name" value="WD40"/>
    <property type="match status" value="2"/>
</dbReference>
<dbReference type="Pfam" id="PF23342">
    <property type="entry name" value="WDR90_beta-prop_4th"/>
    <property type="match status" value="1"/>
</dbReference>
<dbReference type="SMART" id="SM00320">
    <property type="entry name" value="WD40"/>
    <property type="match status" value="20"/>
</dbReference>
<dbReference type="SUPFAM" id="SSF50998">
    <property type="entry name" value="Quinoprotein alcohol dehydrogenase-like"/>
    <property type="match status" value="2"/>
</dbReference>
<dbReference type="SUPFAM" id="SSF50978">
    <property type="entry name" value="WD40 repeat-like"/>
    <property type="match status" value="1"/>
</dbReference>
<dbReference type="PROSITE" id="PS00678">
    <property type="entry name" value="WD_REPEATS_1"/>
    <property type="match status" value="1"/>
</dbReference>
<dbReference type="PROSITE" id="PS50082">
    <property type="entry name" value="WD_REPEATS_2"/>
    <property type="match status" value="2"/>
</dbReference>
<dbReference type="PROSITE" id="PS50294">
    <property type="entry name" value="WD_REPEATS_REGION"/>
    <property type="match status" value="2"/>
</dbReference>